<name>RS15_LACCB</name>
<organism>
    <name type="scientific">Lacticaseibacillus casei (strain BL23)</name>
    <name type="common">Lactobacillus casei</name>
    <dbReference type="NCBI Taxonomy" id="543734"/>
    <lineage>
        <taxon>Bacteria</taxon>
        <taxon>Bacillati</taxon>
        <taxon>Bacillota</taxon>
        <taxon>Bacilli</taxon>
        <taxon>Lactobacillales</taxon>
        <taxon>Lactobacillaceae</taxon>
        <taxon>Lacticaseibacillus</taxon>
    </lineage>
</organism>
<comment type="function">
    <text evidence="1">One of the primary rRNA binding proteins, it binds directly to 16S rRNA where it helps nucleate assembly of the platform of the 30S subunit by binding and bridging several RNA helices of the 16S rRNA.</text>
</comment>
<comment type="function">
    <text evidence="1">Forms an intersubunit bridge (bridge B4) with the 23S rRNA of the 50S subunit in the ribosome.</text>
</comment>
<comment type="subunit">
    <text evidence="1">Part of the 30S ribosomal subunit. Forms a bridge to the 50S subunit in the 70S ribosome, contacting the 23S rRNA.</text>
</comment>
<comment type="similarity">
    <text evidence="1">Belongs to the universal ribosomal protein uS15 family.</text>
</comment>
<dbReference type="EMBL" id="FM177140">
    <property type="protein sequence ID" value="CAQ66635.1"/>
    <property type="molecule type" value="Genomic_DNA"/>
</dbReference>
<dbReference type="SMR" id="B3WE34"/>
<dbReference type="KEGG" id="lcb:LCABL_15540"/>
<dbReference type="HOGENOM" id="CLU_148518_0_0_9"/>
<dbReference type="GO" id="GO:0022627">
    <property type="term" value="C:cytosolic small ribosomal subunit"/>
    <property type="evidence" value="ECO:0007669"/>
    <property type="project" value="TreeGrafter"/>
</dbReference>
<dbReference type="GO" id="GO:0019843">
    <property type="term" value="F:rRNA binding"/>
    <property type="evidence" value="ECO:0007669"/>
    <property type="project" value="UniProtKB-UniRule"/>
</dbReference>
<dbReference type="GO" id="GO:0003735">
    <property type="term" value="F:structural constituent of ribosome"/>
    <property type="evidence" value="ECO:0007669"/>
    <property type="project" value="InterPro"/>
</dbReference>
<dbReference type="GO" id="GO:0006412">
    <property type="term" value="P:translation"/>
    <property type="evidence" value="ECO:0007669"/>
    <property type="project" value="UniProtKB-UniRule"/>
</dbReference>
<dbReference type="CDD" id="cd00353">
    <property type="entry name" value="Ribosomal_S15p_S13e"/>
    <property type="match status" value="1"/>
</dbReference>
<dbReference type="FunFam" id="1.10.287.10:FF:000002">
    <property type="entry name" value="30S ribosomal protein S15"/>
    <property type="match status" value="1"/>
</dbReference>
<dbReference type="Gene3D" id="6.10.250.3130">
    <property type="match status" value="1"/>
</dbReference>
<dbReference type="Gene3D" id="1.10.287.10">
    <property type="entry name" value="S15/NS1, RNA-binding"/>
    <property type="match status" value="1"/>
</dbReference>
<dbReference type="HAMAP" id="MF_01343_B">
    <property type="entry name" value="Ribosomal_uS15_B"/>
    <property type="match status" value="1"/>
</dbReference>
<dbReference type="InterPro" id="IPR000589">
    <property type="entry name" value="Ribosomal_uS15"/>
</dbReference>
<dbReference type="InterPro" id="IPR005290">
    <property type="entry name" value="Ribosomal_uS15_bac-type"/>
</dbReference>
<dbReference type="InterPro" id="IPR009068">
    <property type="entry name" value="uS15_NS1_RNA-bd_sf"/>
</dbReference>
<dbReference type="NCBIfam" id="TIGR00952">
    <property type="entry name" value="S15_bact"/>
    <property type="match status" value="1"/>
</dbReference>
<dbReference type="PANTHER" id="PTHR23321">
    <property type="entry name" value="RIBOSOMAL PROTEIN S15, BACTERIAL AND ORGANELLAR"/>
    <property type="match status" value="1"/>
</dbReference>
<dbReference type="PANTHER" id="PTHR23321:SF26">
    <property type="entry name" value="SMALL RIBOSOMAL SUBUNIT PROTEIN US15M"/>
    <property type="match status" value="1"/>
</dbReference>
<dbReference type="Pfam" id="PF00312">
    <property type="entry name" value="Ribosomal_S15"/>
    <property type="match status" value="1"/>
</dbReference>
<dbReference type="SMART" id="SM01387">
    <property type="entry name" value="Ribosomal_S15"/>
    <property type="match status" value="1"/>
</dbReference>
<dbReference type="SUPFAM" id="SSF47060">
    <property type="entry name" value="S15/NS1 RNA-binding domain"/>
    <property type="match status" value="1"/>
</dbReference>
<dbReference type="PROSITE" id="PS00362">
    <property type="entry name" value="RIBOSOMAL_S15"/>
    <property type="match status" value="1"/>
</dbReference>
<protein>
    <recommendedName>
        <fullName evidence="1">Small ribosomal subunit protein uS15</fullName>
    </recommendedName>
    <alternativeName>
        <fullName evidence="2">30S ribosomal protein S15</fullName>
    </alternativeName>
</protein>
<proteinExistence type="inferred from homology"/>
<sequence>MAIEQTQKDEIIKQYARHDGDTGSPEVQIAVLTAEILALNDHLSVHKKDHHSYVGLMKKIGHRRNLLAYLRNKDITRYRDLIKALGLRR</sequence>
<evidence type="ECO:0000255" key="1">
    <source>
        <dbReference type="HAMAP-Rule" id="MF_01343"/>
    </source>
</evidence>
<evidence type="ECO:0000305" key="2"/>
<gene>
    <name evidence="1" type="primary">rpsO</name>
    <name type="ordered locus">LCABL_15540</name>
</gene>
<reference key="1">
    <citation type="submission" date="2008-06" db="EMBL/GenBank/DDBJ databases">
        <title>Lactobacillus casei BL23 complete genome sequence.</title>
        <authorList>
            <person name="Maze A."/>
            <person name="Boel G."/>
            <person name="Bourand A."/>
            <person name="Loux V."/>
            <person name="Gibrat J.F."/>
            <person name="Zuniga M."/>
            <person name="Hartke A."/>
            <person name="Deutscher J."/>
        </authorList>
    </citation>
    <scope>NUCLEOTIDE SEQUENCE [LARGE SCALE GENOMIC DNA]</scope>
    <source>
        <strain>BL23</strain>
    </source>
</reference>
<keyword id="KW-0687">Ribonucleoprotein</keyword>
<keyword id="KW-0689">Ribosomal protein</keyword>
<keyword id="KW-0694">RNA-binding</keyword>
<keyword id="KW-0699">rRNA-binding</keyword>
<feature type="chain" id="PRO_1000143131" description="Small ribosomal subunit protein uS15">
    <location>
        <begin position="1"/>
        <end position="89"/>
    </location>
</feature>
<accession>B3WE34</accession>